<proteinExistence type="evidence at protein level"/>
<keyword id="KW-1003">Cell membrane</keyword>
<keyword id="KW-0325">Glycoprotein</keyword>
<keyword id="KW-0406">Ion transport</keyword>
<keyword id="KW-0472">Membrane</keyword>
<keyword id="KW-1185">Reference proteome</keyword>
<keyword id="KW-0915">Sodium</keyword>
<keyword id="KW-0739">Sodium transport</keyword>
<keyword id="KW-0762">Sugar transport</keyword>
<keyword id="KW-0769">Symport</keyword>
<keyword id="KW-0812">Transmembrane</keyword>
<keyword id="KW-1133">Transmembrane helix</keyword>
<keyword id="KW-0813">Transport</keyword>
<protein>
    <recommendedName>
        <fullName>Sodium/glucose cotransporter 4</fullName>
        <shortName>Na(+)/glucose cotransporter 4</shortName>
        <shortName>mSGLT4</shortName>
    </recommendedName>
    <alternativeName>
        <fullName>Solute carrier family 5 member 9</fullName>
    </alternativeName>
</protein>
<reference key="1">
    <citation type="journal article" date="2005" name="Science">
        <title>The transcriptional landscape of the mammalian genome.</title>
        <authorList>
            <person name="Carninci P."/>
            <person name="Kasukawa T."/>
            <person name="Katayama S."/>
            <person name="Gough J."/>
            <person name="Frith M.C."/>
            <person name="Maeda N."/>
            <person name="Oyama R."/>
            <person name="Ravasi T."/>
            <person name="Lenhard B."/>
            <person name="Wells C."/>
            <person name="Kodzius R."/>
            <person name="Shimokawa K."/>
            <person name="Bajic V.B."/>
            <person name="Brenner S.E."/>
            <person name="Batalov S."/>
            <person name="Forrest A.R."/>
            <person name="Zavolan M."/>
            <person name="Davis M.J."/>
            <person name="Wilming L.G."/>
            <person name="Aidinis V."/>
            <person name="Allen J.E."/>
            <person name="Ambesi-Impiombato A."/>
            <person name="Apweiler R."/>
            <person name="Aturaliya R.N."/>
            <person name="Bailey T.L."/>
            <person name="Bansal M."/>
            <person name="Baxter L."/>
            <person name="Beisel K.W."/>
            <person name="Bersano T."/>
            <person name="Bono H."/>
            <person name="Chalk A.M."/>
            <person name="Chiu K.P."/>
            <person name="Choudhary V."/>
            <person name="Christoffels A."/>
            <person name="Clutterbuck D.R."/>
            <person name="Crowe M.L."/>
            <person name="Dalla E."/>
            <person name="Dalrymple B.P."/>
            <person name="de Bono B."/>
            <person name="Della Gatta G."/>
            <person name="di Bernardo D."/>
            <person name="Down T."/>
            <person name="Engstrom P."/>
            <person name="Fagiolini M."/>
            <person name="Faulkner G."/>
            <person name="Fletcher C.F."/>
            <person name="Fukushima T."/>
            <person name="Furuno M."/>
            <person name="Futaki S."/>
            <person name="Gariboldi M."/>
            <person name="Georgii-Hemming P."/>
            <person name="Gingeras T.R."/>
            <person name="Gojobori T."/>
            <person name="Green R.E."/>
            <person name="Gustincich S."/>
            <person name="Harbers M."/>
            <person name="Hayashi Y."/>
            <person name="Hensch T.K."/>
            <person name="Hirokawa N."/>
            <person name="Hill D."/>
            <person name="Huminiecki L."/>
            <person name="Iacono M."/>
            <person name="Ikeo K."/>
            <person name="Iwama A."/>
            <person name="Ishikawa T."/>
            <person name="Jakt M."/>
            <person name="Kanapin A."/>
            <person name="Katoh M."/>
            <person name="Kawasawa Y."/>
            <person name="Kelso J."/>
            <person name="Kitamura H."/>
            <person name="Kitano H."/>
            <person name="Kollias G."/>
            <person name="Krishnan S.P."/>
            <person name="Kruger A."/>
            <person name="Kummerfeld S.K."/>
            <person name="Kurochkin I.V."/>
            <person name="Lareau L.F."/>
            <person name="Lazarevic D."/>
            <person name="Lipovich L."/>
            <person name="Liu J."/>
            <person name="Liuni S."/>
            <person name="McWilliam S."/>
            <person name="Madan Babu M."/>
            <person name="Madera M."/>
            <person name="Marchionni L."/>
            <person name="Matsuda H."/>
            <person name="Matsuzawa S."/>
            <person name="Miki H."/>
            <person name="Mignone F."/>
            <person name="Miyake S."/>
            <person name="Morris K."/>
            <person name="Mottagui-Tabar S."/>
            <person name="Mulder N."/>
            <person name="Nakano N."/>
            <person name="Nakauchi H."/>
            <person name="Ng P."/>
            <person name="Nilsson R."/>
            <person name="Nishiguchi S."/>
            <person name="Nishikawa S."/>
            <person name="Nori F."/>
            <person name="Ohara O."/>
            <person name="Okazaki Y."/>
            <person name="Orlando V."/>
            <person name="Pang K.C."/>
            <person name="Pavan W.J."/>
            <person name="Pavesi G."/>
            <person name="Pesole G."/>
            <person name="Petrovsky N."/>
            <person name="Piazza S."/>
            <person name="Reed J."/>
            <person name="Reid J.F."/>
            <person name="Ring B.Z."/>
            <person name="Ringwald M."/>
            <person name="Rost B."/>
            <person name="Ruan Y."/>
            <person name="Salzberg S.L."/>
            <person name="Sandelin A."/>
            <person name="Schneider C."/>
            <person name="Schoenbach C."/>
            <person name="Sekiguchi K."/>
            <person name="Semple C.A."/>
            <person name="Seno S."/>
            <person name="Sessa L."/>
            <person name="Sheng Y."/>
            <person name="Shibata Y."/>
            <person name="Shimada H."/>
            <person name="Shimada K."/>
            <person name="Silva D."/>
            <person name="Sinclair B."/>
            <person name="Sperling S."/>
            <person name="Stupka E."/>
            <person name="Sugiura K."/>
            <person name="Sultana R."/>
            <person name="Takenaka Y."/>
            <person name="Taki K."/>
            <person name="Tammoja K."/>
            <person name="Tan S.L."/>
            <person name="Tang S."/>
            <person name="Taylor M.S."/>
            <person name="Tegner J."/>
            <person name="Teichmann S.A."/>
            <person name="Ueda H.R."/>
            <person name="van Nimwegen E."/>
            <person name="Verardo R."/>
            <person name="Wei C.L."/>
            <person name="Yagi K."/>
            <person name="Yamanishi H."/>
            <person name="Zabarovsky E."/>
            <person name="Zhu S."/>
            <person name="Zimmer A."/>
            <person name="Hide W."/>
            <person name="Bult C."/>
            <person name="Grimmond S.M."/>
            <person name="Teasdale R.D."/>
            <person name="Liu E.T."/>
            <person name="Brusic V."/>
            <person name="Quackenbush J."/>
            <person name="Wahlestedt C."/>
            <person name="Mattick J.S."/>
            <person name="Hume D.A."/>
            <person name="Kai C."/>
            <person name="Sasaki D."/>
            <person name="Tomaru Y."/>
            <person name="Fukuda S."/>
            <person name="Kanamori-Katayama M."/>
            <person name="Suzuki M."/>
            <person name="Aoki J."/>
            <person name="Arakawa T."/>
            <person name="Iida J."/>
            <person name="Imamura K."/>
            <person name="Itoh M."/>
            <person name="Kato T."/>
            <person name="Kawaji H."/>
            <person name="Kawagashira N."/>
            <person name="Kawashima T."/>
            <person name="Kojima M."/>
            <person name="Kondo S."/>
            <person name="Konno H."/>
            <person name="Nakano K."/>
            <person name="Ninomiya N."/>
            <person name="Nishio T."/>
            <person name="Okada M."/>
            <person name="Plessy C."/>
            <person name="Shibata K."/>
            <person name="Shiraki T."/>
            <person name="Suzuki S."/>
            <person name="Tagami M."/>
            <person name="Waki K."/>
            <person name="Watahiki A."/>
            <person name="Okamura-Oho Y."/>
            <person name="Suzuki H."/>
            <person name="Kawai J."/>
            <person name="Hayashizaki Y."/>
        </authorList>
    </citation>
    <scope>NUCLEOTIDE SEQUENCE [LARGE SCALE MRNA]</scope>
    <source>
        <strain>C57BL/6J</strain>
        <tissue>Colon</tissue>
        <tissue>Embryo</tissue>
        <tissue>Skin</tissue>
    </source>
</reference>
<reference key="2">
    <citation type="journal article" date="2004" name="Genome Res.">
        <title>The status, quality, and expansion of the NIH full-length cDNA project: the Mammalian Gene Collection (MGC).</title>
        <authorList>
            <consortium name="The MGC Project Team"/>
        </authorList>
    </citation>
    <scope>NUCLEOTIDE SEQUENCE [LARGE SCALE MRNA]</scope>
    <source>
        <strain>Czech II</strain>
        <tissue>Mammary tumor</tissue>
    </source>
</reference>
<reference key="3">
    <citation type="journal article" date="2010" name="Cell">
        <title>A tissue-specific atlas of mouse protein phosphorylation and expression.</title>
        <authorList>
            <person name="Huttlin E.L."/>
            <person name="Jedrychowski M.P."/>
            <person name="Elias J.E."/>
            <person name="Goswami T."/>
            <person name="Rad R."/>
            <person name="Beausoleil S.A."/>
            <person name="Villen J."/>
            <person name="Haas W."/>
            <person name="Sowa M.E."/>
            <person name="Gygi S.P."/>
        </authorList>
    </citation>
    <scope>IDENTIFICATION BY MASS SPECTROMETRY [LARGE SCALE ANALYSIS]</scope>
    <source>
        <tissue>Kidney</tissue>
    </source>
</reference>
<accession>Q8VDT1</accession>
<accession>Q8BGU9</accession>
<accession>Q8BZW1</accession>
<dbReference type="EMBL" id="AK029158">
    <property type="protein sequence ID" value="BAC26332.1"/>
    <property type="molecule type" value="mRNA"/>
</dbReference>
<dbReference type="EMBL" id="AK033425">
    <property type="protein sequence ID" value="BAC28283.1"/>
    <property type="molecule type" value="mRNA"/>
</dbReference>
<dbReference type="EMBL" id="AK050696">
    <property type="protein sequence ID" value="BAC34386.1"/>
    <property type="molecule type" value="mRNA"/>
</dbReference>
<dbReference type="EMBL" id="BC021357">
    <property type="protein sequence ID" value="AAH21357.2"/>
    <property type="molecule type" value="mRNA"/>
</dbReference>
<dbReference type="CCDS" id="CCDS18474.1"/>
<dbReference type="RefSeq" id="NP_663526.3">
    <property type="nucleotide sequence ID" value="NM_145551.4"/>
</dbReference>
<dbReference type="RefSeq" id="XP_006503063.1">
    <property type="nucleotide sequence ID" value="XM_006503000.3"/>
</dbReference>
<dbReference type="SMR" id="Q8VDT1"/>
<dbReference type="FunCoup" id="Q8VDT1">
    <property type="interactions" value="105"/>
</dbReference>
<dbReference type="STRING" id="10090.ENSMUSP00000099782"/>
<dbReference type="GlyCosmos" id="Q8VDT1">
    <property type="glycosylation" value="1 site, No reported glycans"/>
</dbReference>
<dbReference type="GlyGen" id="Q8VDT1">
    <property type="glycosylation" value="1 site"/>
</dbReference>
<dbReference type="iPTMnet" id="Q8VDT1"/>
<dbReference type="PhosphoSitePlus" id="Q8VDT1"/>
<dbReference type="jPOST" id="Q8VDT1"/>
<dbReference type="PaxDb" id="10090-ENSMUSP00000099782"/>
<dbReference type="ProteomicsDB" id="256606"/>
<dbReference type="Antibodypedia" id="32891">
    <property type="antibodies" value="159 antibodies from 23 providers"/>
</dbReference>
<dbReference type="DNASU" id="230612"/>
<dbReference type="Ensembl" id="ENSMUST00000102719.8">
    <property type="protein sequence ID" value="ENSMUSP00000099780.2"/>
    <property type="gene ID" value="ENSMUSG00000028544.15"/>
</dbReference>
<dbReference type="Ensembl" id="ENSMUST00000102720.8">
    <property type="protein sequence ID" value="ENSMUSP00000099781.2"/>
    <property type="gene ID" value="ENSMUSG00000028544.15"/>
</dbReference>
<dbReference type="Ensembl" id="ENSMUST00000102721.8">
    <property type="protein sequence ID" value="ENSMUSP00000099782.2"/>
    <property type="gene ID" value="ENSMUSG00000028544.15"/>
</dbReference>
<dbReference type="GeneID" id="230612"/>
<dbReference type="KEGG" id="mmu:230612"/>
<dbReference type="UCSC" id="uc008udj.3">
    <property type="organism name" value="mouse"/>
</dbReference>
<dbReference type="AGR" id="MGI:2140201"/>
<dbReference type="CTD" id="200010"/>
<dbReference type="MGI" id="MGI:2140201">
    <property type="gene designation" value="Slc5a9"/>
</dbReference>
<dbReference type="VEuPathDB" id="HostDB:ENSMUSG00000028544"/>
<dbReference type="eggNOG" id="KOG2349">
    <property type="taxonomic scope" value="Eukaryota"/>
</dbReference>
<dbReference type="GeneTree" id="ENSGT00940000157546"/>
<dbReference type="HOGENOM" id="CLU_018808_9_2_1"/>
<dbReference type="InParanoid" id="Q8VDT1"/>
<dbReference type="OMA" id="WKRMTPT"/>
<dbReference type="OrthoDB" id="6132759at2759"/>
<dbReference type="PhylomeDB" id="Q8VDT1"/>
<dbReference type="TreeFam" id="TF352855"/>
<dbReference type="Reactome" id="R-MMU-189200">
    <property type="pathway name" value="Cellular hexose transport"/>
</dbReference>
<dbReference type="BioGRID-ORCS" id="230612">
    <property type="hits" value="1 hit in 75 CRISPR screens"/>
</dbReference>
<dbReference type="ChiTaRS" id="Slc5a9">
    <property type="organism name" value="mouse"/>
</dbReference>
<dbReference type="PRO" id="PR:Q8VDT1"/>
<dbReference type="Proteomes" id="UP000000589">
    <property type="component" value="Chromosome 4"/>
</dbReference>
<dbReference type="RNAct" id="Q8VDT1">
    <property type="molecule type" value="protein"/>
</dbReference>
<dbReference type="Bgee" id="ENSMUSG00000028544">
    <property type="expression patterns" value="Expressed in optic fissure and 71 other cell types or tissues"/>
</dbReference>
<dbReference type="ExpressionAtlas" id="Q8VDT1">
    <property type="expression patterns" value="baseline and differential"/>
</dbReference>
<dbReference type="GO" id="GO:0005886">
    <property type="term" value="C:plasma membrane"/>
    <property type="evidence" value="ECO:0007669"/>
    <property type="project" value="UniProtKB-SubCell"/>
</dbReference>
<dbReference type="GO" id="GO:0015293">
    <property type="term" value="F:symporter activity"/>
    <property type="evidence" value="ECO:0007669"/>
    <property type="project" value="UniProtKB-KW"/>
</dbReference>
<dbReference type="GO" id="GO:0006814">
    <property type="term" value="P:sodium ion transport"/>
    <property type="evidence" value="ECO:0007669"/>
    <property type="project" value="UniProtKB-KW"/>
</dbReference>
<dbReference type="FunFam" id="1.20.1730.10:FF:000004">
    <property type="entry name" value="sodium/glucose cotransporter 5 isoform X1"/>
    <property type="match status" value="1"/>
</dbReference>
<dbReference type="Gene3D" id="1.20.1730.10">
    <property type="entry name" value="Sodium/glucose cotransporter"/>
    <property type="match status" value="1"/>
</dbReference>
<dbReference type="InterPro" id="IPR038377">
    <property type="entry name" value="Na/Glc_symporter_sf"/>
</dbReference>
<dbReference type="InterPro" id="IPR001734">
    <property type="entry name" value="Na/solute_symporter"/>
</dbReference>
<dbReference type="InterPro" id="IPR018212">
    <property type="entry name" value="Na/solute_symporter_CS"/>
</dbReference>
<dbReference type="NCBIfam" id="TIGR00813">
    <property type="entry name" value="sss"/>
    <property type="match status" value="1"/>
</dbReference>
<dbReference type="PANTHER" id="PTHR11819:SF96">
    <property type="entry name" value="SODIUM_GLUCOSE COTRANSPORTER 4"/>
    <property type="match status" value="1"/>
</dbReference>
<dbReference type="PANTHER" id="PTHR11819">
    <property type="entry name" value="SOLUTE CARRIER FAMILY 5"/>
    <property type="match status" value="1"/>
</dbReference>
<dbReference type="Pfam" id="PF00474">
    <property type="entry name" value="SSF"/>
    <property type="match status" value="1"/>
</dbReference>
<dbReference type="PROSITE" id="PS00456">
    <property type="entry name" value="NA_SOLUT_SYMP_1"/>
    <property type="match status" value="1"/>
</dbReference>
<dbReference type="PROSITE" id="PS50283">
    <property type="entry name" value="NA_SOLUT_SYMP_3"/>
    <property type="match status" value="1"/>
</dbReference>
<sequence length="685" mass="75065">MNTELVAMEPGVSRNGVRTETTTNPSLGLHTYDIVVVVIYFVFVLAVGIWSSIRASRGTVGGYFLAGRSMTWWPIGASLMSSNVGSGLFIGLAGTGAAGGLAVGGFEWNATFLLLALGWIFVPVYIAAGVVTMPQYLKKRFGGQRIQVYMSVLSLILYIFTKISTDIFSGALFIQMALGWNLYLSTVILLVVTAVYTIAGGLTAVIYTDALQTVIMVGGALVLMFLGFQEVGWYPGLQQLYRQAIPNTTVPNTTCHLPRPDAFHMLRDPVNGDIPWPGLIFGLTVLATWCWCTDQVIVQRSLAAKNLSHAKGGSVLGGYLKILPMFFIVMPGMISRALYPDEVACVDPDICQRVCGARVGCSNIAYPKLVMALMPVGLRGLMIAVIMAALMSSLTSIFNSSSTLFAIDVWQRFRRQASEQELMVVGRLFVVFLVVISILWIPIIQSSNSGQLFDYIQSITSYLAPPITALFLLAIFCKRVNEPGAFWGLMFGLVVGILRMILEFSYSAPACGEMDRRPAVLKDFHYLYFALLLCGLTAIIIVVISFFTEPIPDDKLARLTWWTRNCAVSDLQKKTSVSVNNTEDDNSPGLAGRPVVEGPAGDEEEANTTQGPEQPGALHRSWGKWLWNWFCGLSGAPQQALSPAEKAVLEQKLTSIEEEPLWRRVCNINAIILLAINIFLWGYFA</sequence>
<organism>
    <name type="scientific">Mus musculus</name>
    <name type="common">Mouse</name>
    <dbReference type="NCBI Taxonomy" id="10090"/>
    <lineage>
        <taxon>Eukaryota</taxon>
        <taxon>Metazoa</taxon>
        <taxon>Chordata</taxon>
        <taxon>Craniata</taxon>
        <taxon>Vertebrata</taxon>
        <taxon>Euteleostomi</taxon>
        <taxon>Mammalia</taxon>
        <taxon>Eutheria</taxon>
        <taxon>Euarchontoglires</taxon>
        <taxon>Glires</taxon>
        <taxon>Rodentia</taxon>
        <taxon>Myomorpha</taxon>
        <taxon>Muroidea</taxon>
        <taxon>Muridae</taxon>
        <taxon>Murinae</taxon>
        <taxon>Mus</taxon>
        <taxon>Mus</taxon>
    </lineage>
</organism>
<feature type="chain" id="PRO_0000333806" description="Sodium/glucose cotransporter 4">
    <location>
        <begin position="1"/>
        <end position="685"/>
    </location>
</feature>
<feature type="topological domain" description="Extracellular" evidence="2">
    <location>
        <begin position="1"/>
        <end position="32"/>
    </location>
</feature>
<feature type="transmembrane region" description="Helical" evidence="2">
    <location>
        <begin position="33"/>
        <end position="53"/>
    </location>
</feature>
<feature type="topological domain" description="Cytoplasmic" evidence="2">
    <location>
        <begin position="54"/>
        <end position="71"/>
    </location>
</feature>
<feature type="transmembrane region" description="Helical" evidence="2">
    <location>
        <begin position="72"/>
        <end position="94"/>
    </location>
</feature>
<feature type="topological domain" description="Extracellular" evidence="2">
    <location>
        <begin position="95"/>
        <end position="110"/>
    </location>
</feature>
<feature type="transmembrane region" description="Helical" evidence="2">
    <location>
        <begin position="111"/>
        <end position="131"/>
    </location>
</feature>
<feature type="topological domain" description="Cytoplasmic" evidence="2">
    <location>
        <begin position="132"/>
        <end position="153"/>
    </location>
</feature>
<feature type="transmembrane region" description="Helical" evidence="2">
    <location>
        <begin position="154"/>
        <end position="174"/>
    </location>
</feature>
<feature type="topological domain" description="Extracellular" evidence="2">
    <location>
        <begin position="175"/>
        <end position="186"/>
    </location>
</feature>
<feature type="transmembrane region" description="Helical" evidence="2">
    <location>
        <begin position="187"/>
        <end position="207"/>
    </location>
</feature>
<feature type="topological domain" description="Cytoplasmic" evidence="2">
    <location>
        <begin position="208"/>
        <end position="213"/>
    </location>
</feature>
<feature type="transmembrane region" description="Helical" evidence="2">
    <location>
        <begin position="214"/>
        <end position="234"/>
    </location>
</feature>
<feature type="topological domain" description="Extracellular" evidence="2">
    <location>
        <begin position="235"/>
        <end position="271"/>
    </location>
</feature>
<feature type="transmembrane region" description="Helical" evidence="2">
    <location>
        <begin position="272"/>
        <end position="292"/>
    </location>
</feature>
<feature type="topological domain" description="Cytoplasmic" evidence="2">
    <location>
        <begin position="293"/>
        <end position="313"/>
    </location>
</feature>
<feature type="transmembrane region" description="Helical" evidence="2">
    <location>
        <begin position="314"/>
        <end position="334"/>
    </location>
</feature>
<feature type="topological domain" description="Extracellular" evidence="2">
    <location>
        <begin position="335"/>
        <end position="379"/>
    </location>
</feature>
<feature type="transmembrane region" description="Helical" evidence="2">
    <location>
        <begin position="380"/>
        <end position="402"/>
    </location>
</feature>
<feature type="topological domain" description="Cytoplasmic" evidence="2">
    <location>
        <begin position="403"/>
        <end position="423"/>
    </location>
</feature>
<feature type="transmembrane region" description="Helical" evidence="2">
    <location>
        <begin position="424"/>
        <end position="444"/>
    </location>
</feature>
<feature type="topological domain" description="Extracellular" evidence="2">
    <location>
        <begin position="445"/>
        <end position="455"/>
    </location>
</feature>
<feature type="transmembrane region" description="Helical" evidence="2">
    <location>
        <begin position="456"/>
        <end position="476"/>
    </location>
</feature>
<feature type="topological domain" description="Cytoplasmic" evidence="2">
    <location>
        <begin position="477"/>
        <end position="483"/>
    </location>
</feature>
<feature type="transmembrane region" description="Helical" evidence="2">
    <location>
        <begin position="484"/>
        <end position="504"/>
    </location>
</feature>
<feature type="topological domain" description="Extracellular" evidence="2">
    <location>
        <begin position="505"/>
        <end position="526"/>
    </location>
</feature>
<feature type="transmembrane region" description="Helical" evidence="2">
    <location>
        <begin position="527"/>
        <end position="547"/>
    </location>
</feature>
<feature type="topological domain" description="Cytoplasmic" evidence="2">
    <location>
        <begin position="548"/>
        <end position="664"/>
    </location>
</feature>
<feature type="transmembrane region" description="Helical" evidence="2">
    <location>
        <begin position="665"/>
        <end position="685"/>
    </location>
</feature>
<feature type="region of interest" description="Disordered" evidence="3">
    <location>
        <begin position="1"/>
        <end position="20"/>
    </location>
</feature>
<feature type="region of interest" description="Disordered" evidence="3">
    <location>
        <begin position="577"/>
        <end position="616"/>
    </location>
</feature>
<feature type="glycosylation site" description="N-linked (GlcNAc...) asparagine" evidence="2">
    <location>
        <position position="247"/>
    </location>
</feature>
<feature type="sequence conflict" description="In Ref. 2; AAH21357." evidence="4" ref="2">
    <original>L</original>
    <variation>V</variation>
    <location>
        <position position="190"/>
    </location>
</feature>
<feature type="sequence conflict" description="In Ref. 1; BAC28283." evidence="4" ref="1">
    <original>T</original>
    <variation>A</variation>
    <location>
        <position position="203"/>
    </location>
</feature>
<feature type="sequence conflict" description="In Ref. 2; AAH21357." evidence="4" ref="2">
    <original>D</original>
    <variation>G</variation>
    <location>
        <position position="584"/>
    </location>
</feature>
<feature type="sequence conflict" description="In Ref. 2; AAH21357." evidence="4" ref="2">
    <original>A</original>
    <variation>S</variation>
    <location>
        <position position="685"/>
    </location>
</feature>
<name>SC5A9_MOUSE</name>
<comment type="function">
    <text evidence="1">Electrogenic Na(+)-coupled sugar symporter that may play a primary role in D-mannose and possibly D-fructose and D-glucose transport at the plasma membrane. Transporter activity is driven by a transmembrane Na(+) electrochemical gradient set by the Na(+)/K(+) pump. Exclusively recognizes sugar substrates having a pyranose ring with an axial hydroxyl group on carbon 2.</text>
</comment>
<comment type="catalytic activity">
    <reaction evidence="1">
        <text>D-mannose(out) + n Na(+)(out) = D-mannose(in) + n Na(+)(in)</text>
        <dbReference type="Rhea" id="RHEA:75475"/>
        <dbReference type="ChEBI" id="CHEBI:4208"/>
        <dbReference type="ChEBI" id="CHEBI:29101"/>
    </reaction>
</comment>
<comment type="subcellular location">
    <subcellularLocation>
        <location evidence="1">Cell membrane</location>
        <topology evidence="2">Multi-pass membrane protein</topology>
    </subcellularLocation>
</comment>
<comment type="similarity">
    <text evidence="4">Belongs to the sodium:solute symporter (SSF) (TC 2.A.21) family.</text>
</comment>
<gene>
    <name type="primary">Slc5a9</name>
    <name type="synonym">Sglt4</name>
</gene>
<evidence type="ECO:0000250" key="1">
    <source>
        <dbReference type="UniProtKB" id="Q2M3M2"/>
    </source>
</evidence>
<evidence type="ECO:0000255" key="2"/>
<evidence type="ECO:0000256" key="3">
    <source>
        <dbReference type="SAM" id="MobiDB-lite"/>
    </source>
</evidence>
<evidence type="ECO:0000305" key="4"/>